<feature type="chain" id="PRO_0000083413" description="Transcription factor GATA-4">
    <location>
        <begin position="1"/>
        <end position="442"/>
    </location>
</feature>
<feature type="zinc finger region" description="GATA-type 1" evidence="4">
    <location>
        <begin position="217"/>
        <end position="241"/>
    </location>
</feature>
<feature type="zinc finger region" description="GATA-type 2" evidence="4">
    <location>
        <begin position="271"/>
        <end position="295"/>
    </location>
</feature>
<feature type="region of interest" description="Disordered" evidence="5">
    <location>
        <begin position="60"/>
        <end position="107"/>
    </location>
</feature>
<feature type="region of interest" description="Disordered" evidence="5">
    <location>
        <begin position="314"/>
        <end position="378"/>
    </location>
</feature>
<feature type="region of interest" description="Disordered" evidence="5">
    <location>
        <begin position="409"/>
        <end position="428"/>
    </location>
</feature>
<feature type="compositionally biased region" description="Gly residues" evidence="5">
    <location>
        <begin position="60"/>
        <end position="82"/>
    </location>
</feature>
<feature type="compositionally biased region" description="Basic residues" evidence="5">
    <location>
        <begin position="317"/>
        <end position="326"/>
    </location>
</feature>
<feature type="compositionally biased region" description="Low complexity" evidence="5">
    <location>
        <begin position="343"/>
        <end position="358"/>
    </location>
</feature>
<feature type="compositionally biased region" description="Polar residues" evidence="5">
    <location>
        <begin position="413"/>
        <end position="428"/>
    </location>
</feature>
<feature type="modified residue" description="N6-methyllysine; by EZH2" evidence="3">
    <location>
        <position position="300"/>
    </location>
</feature>
<feature type="splice variant" id="VSP_055082" description="In isoform 2." evidence="26">
    <original>L</original>
    <variation>LV</variation>
    <location>
        <position position="205"/>
    </location>
</feature>
<feature type="sequence variant" id="VAR_067605" description="In VSD1; dbSNP:rs199922907." evidence="11">
    <original>A</original>
    <variation>V</variation>
    <location>
        <position position="6"/>
    </location>
</feature>
<feature type="sequence variant" id="VAR_071514" description="In TOF; slightly diminished DNA-binding affinity; decreased transcriptional activity; no effect on subcellular location; no effect on interaction with TBX5; dbSNP:rs864321699." evidence="19">
    <original>A</original>
    <variation>P</variation>
    <location>
        <position position="9"/>
    </location>
</feature>
<feature type="sequence variant" id="VAR_072111" description="Found in patients with dilated cardiomyopathy; likely pathogenic; results in significantly reduced transactivation activity; dbSNP:rs1139241." evidence="21 25">
    <original>V</original>
    <variation>L</variation>
    <location>
        <position position="39"/>
    </location>
</feature>
<feature type="sequence variant" id="VAR_067606" description="In VSD1; significantly reduced activation of the NPPA promoter with the mutant protein compared to wild-type; dbSNP:rs387906770." evidence="18">
    <original>R</original>
    <variation>W</variation>
    <location>
        <position position="43"/>
    </location>
</feature>
<feature type="sequence variant" id="VAR_067607" description="In VSD1." evidence="11">
    <location>
        <position position="46"/>
    </location>
</feature>
<feature type="sequence variant" id="VAR_071515" description="In TOF; slightly diminished DNA-binding affinity; decreased transcriptional activity; no effect on subcellular location; no effect on interaction with TBX5." evidence="19">
    <original>L</original>
    <variation>V</variation>
    <location>
        <position position="51"/>
    </location>
</feature>
<feature type="sequence variant" id="VAR_038195" description="In ASD2; dbSNP:rs104894074." evidence="8">
    <original>S</original>
    <variation>F</variation>
    <location>
        <position position="52"/>
    </location>
</feature>
<feature type="sequence variant" id="VAR_067608" description="In ASD2; uncertain significance; dbSNP:rs56191129." evidence="10">
    <original>G</original>
    <variation>A</variation>
    <location>
        <position position="93"/>
    </location>
</feature>
<feature type="sequence variant" id="VAR_067609" description="In TOF." evidence="11">
    <original>A</original>
    <variation>AA</variation>
    <location>
        <position position="118"/>
    </location>
</feature>
<feature type="sequence variant" id="VAR_067610" description="In AVSD4; also in a patient with VSD1 and a patient with TOF; dbSNP:rs387906769." evidence="9 11 15">
    <original>P</original>
    <variation>S</variation>
    <location>
        <position position="163"/>
    </location>
</feature>
<feature type="sequence variant" id="VAR_070670" description="In TACHD; impairs the ability to bind and transactivate the promoter of AMH gene; abolishes interaction with ZFPM2; dbSNP:rs398122402." evidence="16">
    <original>G</original>
    <variation>R</variation>
    <location>
        <position position="221"/>
    </location>
</feature>
<feature type="sequence variant" id="VAR_072112" description="Found in patients with dilated cardiomyopathy; likely pathogenic; results in significantly reduced transactivation activity." evidence="21">
    <original>P</original>
    <variation>Q</variation>
    <location>
        <position position="226"/>
    </location>
</feature>
<feature type="sequence variant" id="VAR_072113" description="Found in patients with dilated cardiomyopathy; likely pathogenic; results in significantly reduced transactivation activity." evidence="20">
    <original>C</original>
    <variation>S</variation>
    <location>
        <position position="271"/>
    </location>
</feature>
<feature type="sequence variant" id="VAR_072114" description="Found in patients with dilated cardiomyopathy; likely pathogenic; results in significantly reduced transactivation activity." evidence="21">
    <original>T</original>
    <variation>S</variation>
    <location>
        <position position="279"/>
    </location>
</feature>
<feature type="sequence variant" id="VAR_067611" description="In ASD2; dbSNP:rs387906771." evidence="14">
    <original>T</original>
    <variation>M</variation>
    <location>
        <position position="280"/>
    </location>
</feature>
<feature type="sequence variant" id="VAR_071516" description="In TOF; drastically diminished DNA-binding affinity; decreased transcriptional activity; no effect on subcellular location; completely disrupted interaction with TBX5." evidence="19">
    <original>N</original>
    <variation>S</variation>
    <location>
        <position position="285"/>
    </location>
</feature>
<feature type="sequence variant" id="VAR_067612" description="In ASD2; dbSNP:rs104894073." evidence="9">
    <original>G</original>
    <variation>C</variation>
    <location>
        <position position="296"/>
    </location>
</feature>
<feature type="sequence variant" id="VAR_067613" description="In VSD1; dbSNP:rs104894073." evidence="17">
    <original>G</original>
    <variation>R</variation>
    <location>
        <position position="296"/>
    </location>
</feature>
<feature type="sequence variant" id="VAR_016204" description="In ASD2; decreased function resulting in reduced myocardial genes expression; fails to down-regulate endothelial and endocardial genes; dbSNP:rs104894073." evidence="6 8 23">
    <original>G</original>
    <variation>S</variation>
    <location>
        <position position="296"/>
    </location>
</feature>
<feature type="sequence variant" id="VAR_067614" description="In ASD2; dbSNP:rs387906772." evidence="13">
    <original>M</original>
    <variation>V</variation>
    <location>
        <position position="310"/>
    </location>
</feature>
<feature type="sequence variant" id="VAR_067615" description="In ASD2; uncertain significance; dbSNP:rs56298569." evidence="10">
    <original>Q</original>
    <variation>E</variation>
    <location>
        <position position="316"/>
    </location>
</feature>
<feature type="sequence variant" id="VAR_067616" description="In AVSD4; dbSNP:rs115372595." evidence="9">
    <original>A</original>
    <variation>V</variation>
    <location>
        <position position="346"/>
    </location>
</feature>
<feature type="sequence variant" id="VAR_067617" description="In VSD1; dbSNP:rs368489876." evidence="11">
    <original>E</original>
    <variation>K</variation>
    <location>
        <position position="359"/>
    </location>
</feature>
<feature type="sequence variant" id="VAR_038196" description="In dbSNP:rs3729856.">
    <original>S</original>
    <variation>G</variation>
    <location>
        <position position="377"/>
    </location>
</feature>
<feature type="sequence variant" id="VAR_067618" description="In ASD2; dbSNP:rs777778466." evidence="9">
    <original>L</original>
    <variation>M</variation>
    <location>
        <position position="403"/>
    </location>
</feature>
<feature type="sequence variant" id="VAR_067619" description="In VSD1 and TOF; uncertain significance; dbSNP:rs115099192." evidence="11 15">
    <original>P</original>
    <variation>Q</variation>
    <location>
        <position position="407"/>
    </location>
</feature>
<feature type="sequence variant" id="VAR_067620" description="In dbSNP:rs55633527." evidence="10">
    <original>A</original>
    <variation>V</variation>
    <location>
        <position position="411"/>
    </location>
</feature>
<feature type="sequence variant" id="VAR_067621" description="In dbSNP:rs56208331." evidence="10 22">
    <original>D</original>
    <variation>N</variation>
    <location>
        <position position="425"/>
    </location>
</feature>
<feature type="sequence variant" id="VAR_067622" description="In VSD1." evidence="11">
    <original>S</original>
    <variation>T</variation>
    <location>
        <position position="429"/>
    </location>
</feature>
<feature type="sequence variant" id="VAR_067623" description="In VSD1; dbSNP:rs146017816." evidence="11">
    <original>A</original>
    <variation>V</variation>
    <location>
        <position position="442"/>
    </location>
</feature>
<feature type="sequence conflict" description="In Ref. 1; AAA58496." evidence="27" ref="1">
    <original>E</original>
    <variation>Q</variation>
    <location>
        <position position="19"/>
    </location>
</feature>
<feature type="sequence conflict" description="In Ref. 1; AAA58496." evidence="27" ref="1">
    <original>A</original>
    <variation>P</variation>
    <location>
        <position position="25"/>
    </location>
</feature>
<feature type="sequence conflict" description="In Ref. 1; AAA58496." evidence="27" ref="1">
    <original>A</original>
    <variation>P</variation>
    <location>
        <position position="66"/>
    </location>
</feature>
<feature type="sequence conflict" description="In Ref. 1; AAA58496." evidence="27" ref="1">
    <original>S</original>
    <variation>P</variation>
    <location>
        <position position="71"/>
    </location>
</feature>
<feature type="sequence conflict" description="In Ref. 1; AAA58496." evidence="27" ref="1">
    <original>D</original>
    <variation>T</variation>
    <location>
        <position position="95"/>
    </location>
</feature>
<feature type="sequence conflict" description="In Ref. 2; AAW51922." evidence="27" ref="2">
    <original>T</original>
    <variation>A</variation>
    <location>
        <position position="280"/>
    </location>
</feature>
<feature type="turn" evidence="29">
    <location>
        <begin position="272"/>
        <end position="274"/>
    </location>
</feature>
<feature type="strand" evidence="28">
    <location>
        <begin position="282"/>
        <end position="284"/>
    </location>
</feature>
<feature type="strand" evidence="28">
    <location>
        <begin position="290"/>
        <end position="292"/>
    </location>
</feature>
<feature type="helix" evidence="29">
    <location>
        <begin position="293"/>
        <end position="302"/>
    </location>
</feature>
<feature type="turn" evidence="29">
    <location>
        <begin position="308"/>
        <end position="310"/>
    </location>
</feature>
<protein>
    <recommendedName>
        <fullName>Transcription factor GATA-4</fullName>
    </recommendedName>
    <alternativeName>
        <fullName>GATA-binding factor 4</fullName>
    </alternativeName>
</protein>
<organism>
    <name type="scientific">Homo sapiens</name>
    <name type="common">Human</name>
    <dbReference type="NCBI Taxonomy" id="9606"/>
    <lineage>
        <taxon>Eukaryota</taxon>
        <taxon>Metazoa</taxon>
        <taxon>Chordata</taxon>
        <taxon>Craniata</taxon>
        <taxon>Vertebrata</taxon>
        <taxon>Euteleostomi</taxon>
        <taxon>Mammalia</taxon>
        <taxon>Eutheria</taxon>
        <taxon>Euarchontoglires</taxon>
        <taxon>Primates</taxon>
        <taxon>Haplorrhini</taxon>
        <taxon>Catarrhini</taxon>
        <taxon>Hominidae</taxon>
        <taxon>Homo</taxon>
    </lineage>
</organism>
<name>GATA4_HUMAN</name>
<keyword id="KW-0002">3D-structure</keyword>
<keyword id="KW-0010">Activator</keyword>
<keyword id="KW-0025">Alternative splicing</keyword>
<keyword id="KW-0976">Atrial septal defect</keyword>
<keyword id="KW-0122">Cardiomyopathy</keyword>
<keyword id="KW-0225">Disease variant</keyword>
<keyword id="KW-0238">DNA-binding</keyword>
<keyword id="KW-0479">Metal-binding</keyword>
<keyword id="KW-0488">Methylation</keyword>
<keyword id="KW-0539">Nucleus</keyword>
<keyword id="KW-1267">Proteomics identification</keyword>
<keyword id="KW-1185">Reference proteome</keyword>
<keyword id="KW-0677">Repeat</keyword>
<keyword id="KW-0804">Transcription</keyword>
<keyword id="KW-0805">Transcription regulation</keyword>
<keyword id="KW-0862">Zinc</keyword>
<keyword id="KW-0863">Zinc-finger</keyword>
<proteinExistence type="evidence at protein level"/>
<gene>
    <name type="primary">GATA4</name>
</gene>
<reference key="1">
    <citation type="journal article" date="1995" name="Gene">
        <title>Identification of a GATA motif in the cardiac alpha-myosin heavy-chain-encoding gene and isolation of a human GATA-4 cDNA.</title>
        <authorList>
            <person name="Huang W.Y."/>
            <person name="Cukerman E."/>
            <person name="Liew C.C."/>
        </authorList>
    </citation>
    <scope>NUCLEOTIDE SEQUENCE [MRNA] (ISOFORM 1)</scope>
    <scope>VARIANT LEU-39</scope>
    <source>
        <tissue>Heart</tissue>
    </source>
</reference>
<reference key="2">
    <citation type="submission" date="2004-09" db="EMBL/GenBank/DDBJ databases">
        <authorList>
            <person name="Palaszewski I."/>
            <person name="Dame C."/>
        </authorList>
    </citation>
    <scope>NUCLEOTIDE SEQUENCE [MRNA] (ISOFORM 1)</scope>
</reference>
<reference key="3">
    <citation type="journal article" date="2006" name="Nature">
        <title>DNA sequence and analysis of human chromosome 8.</title>
        <authorList>
            <person name="Nusbaum C."/>
            <person name="Mikkelsen T.S."/>
            <person name="Zody M.C."/>
            <person name="Asakawa S."/>
            <person name="Taudien S."/>
            <person name="Garber M."/>
            <person name="Kodira C.D."/>
            <person name="Schueler M.G."/>
            <person name="Shimizu A."/>
            <person name="Whittaker C.A."/>
            <person name="Chang J.L."/>
            <person name="Cuomo C.A."/>
            <person name="Dewar K."/>
            <person name="FitzGerald M.G."/>
            <person name="Yang X."/>
            <person name="Allen N.R."/>
            <person name="Anderson S."/>
            <person name="Asakawa T."/>
            <person name="Blechschmidt K."/>
            <person name="Bloom T."/>
            <person name="Borowsky M.L."/>
            <person name="Butler J."/>
            <person name="Cook A."/>
            <person name="Corum B."/>
            <person name="DeArellano K."/>
            <person name="DeCaprio D."/>
            <person name="Dooley K.T."/>
            <person name="Dorris L. III"/>
            <person name="Engels R."/>
            <person name="Gloeckner G."/>
            <person name="Hafez N."/>
            <person name="Hagopian D.S."/>
            <person name="Hall J.L."/>
            <person name="Ishikawa S.K."/>
            <person name="Jaffe D.B."/>
            <person name="Kamat A."/>
            <person name="Kudoh J."/>
            <person name="Lehmann R."/>
            <person name="Lokitsang T."/>
            <person name="Macdonald P."/>
            <person name="Major J.E."/>
            <person name="Matthews C.D."/>
            <person name="Mauceli E."/>
            <person name="Menzel U."/>
            <person name="Mihalev A.H."/>
            <person name="Minoshima S."/>
            <person name="Murayama Y."/>
            <person name="Naylor J.W."/>
            <person name="Nicol R."/>
            <person name="Nguyen C."/>
            <person name="O'Leary S.B."/>
            <person name="O'Neill K."/>
            <person name="Parker S.C.J."/>
            <person name="Polley A."/>
            <person name="Raymond C.K."/>
            <person name="Reichwald K."/>
            <person name="Rodriguez J."/>
            <person name="Sasaki T."/>
            <person name="Schilhabel M."/>
            <person name="Siddiqui R."/>
            <person name="Smith C.L."/>
            <person name="Sneddon T.P."/>
            <person name="Talamas J.A."/>
            <person name="Tenzin P."/>
            <person name="Topham K."/>
            <person name="Venkataraman V."/>
            <person name="Wen G."/>
            <person name="Yamazaki S."/>
            <person name="Young S.K."/>
            <person name="Zeng Q."/>
            <person name="Zimmer A.R."/>
            <person name="Rosenthal A."/>
            <person name="Birren B.W."/>
            <person name="Platzer M."/>
            <person name="Shimizu N."/>
            <person name="Lander E.S."/>
        </authorList>
    </citation>
    <scope>NUCLEOTIDE SEQUENCE [LARGE SCALE GENOMIC DNA]</scope>
</reference>
<reference key="4">
    <citation type="journal article" date="2004" name="Genome Res.">
        <title>The status, quality, and expansion of the NIH full-length cDNA project: the Mammalian Gene Collection (MGC).</title>
        <authorList>
            <consortium name="The MGC Project Team"/>
        </authorList>
    </citation>
    <scope>NUCLEOTIDE SEQUENCE [LARGE SCALE MRNA] (ISOFORMS 1 AND 2)</scope>
    <source>
        <tissue>Heart</tissue>
        <tissue>Lung</tissue>
    </source>
</reference>
<reference key="5">
    <citation type="journal article" date="2005" name="J. Biol. Chem.">
        <title>Regulation of sphingosine-1-phosphate lyase gene expression by members of the GATA family of transcription factors.</title>
        <authorList>
            <person name="Oskouian B."/>
            <person name="Mendel J."/>
            <person name="Shocron E."/>
            <person name="Lee M.A. Jr."/>
            <person name="Fyrst H."/>
            <person name="Saba J.D."/>
        </authorList>
    </citation>
    <scope>FUNCTION</scope>
</reference>
<reference key="6">
    <citation type="journal article" date="2009" name="Anal. Chem.">
        <title>Lys-N and trypsin cover complementary parts of the phosphoproteome in a refined SCX-based approach.</title>
        <authorList>
            <person name="Gauci S."/>
            <person name="Helbig A.O."/>
            <person name="Slijper M."/>
            <person name="Krijgsveld J."/>
            <person name="Heck A.J."/>
            <person name="Mohammed S."/>
        </authorList>
    </citation>
    <scope>IDENTIFICATION BY MASS SPECTROMETRY [LARGE SCALE ANALYSIS]</scope>
</reference>
<reference key="7">
    <citation type="journal article" date="2010" name="J. Biol. Chem.">
        <title>Cyclin-dependent kinase-9 is a component of the p300/GATA4 complex required for phenylephrine-induced hypertrophy in cardiomyocytes.</title>
        <authorList>
            <person name="Sunagawa Y."/>
            <person name="Morimoto T."/>
            <person name="Takaya T."/>
            <person name="Kaichi S."/>
            <person name="Wada H."/>
            <person name="Kawamura T."/>
            <person name="Fujita M."/>
            <person name="Shimatsu A."/>
            <person name="Kita T."/>
            <person name="Hasegawa K."/>
        </authorList>
    </citation>
    <scope>FUNCTION IN CARDIAC HYPERTROPHY</scope>
    <scope>IDENTIFICATION IN COMPLEX WITH CCNT1; EP300 AND GATA4</scope>
</reference>
<reference key="8">
    <citation type="journal article" date="2022" name="Cell">
        <title>Transcription factor protein interactomes reveal genetic determinants in heart disease.</title>
        <authorList>
            <person name="Gonzalez-Teran B."/>
            <person name="Pittman M."/>
            <person name="Felix F."/>
            <person name="Thomas R."/>
            <person name="Richmond-Buccola D."/>
            <person name="Huettenhain R."/>
            <person name="Choudhary K."/>
            <person name="Moroni E."/>
            <person name="Costa M.W."/>
            <person name="Huang Y."/>
            <person name="Padmanabhan A."/>
            <person name="Alexanian M."/>
            <person name="Lee C.Y."/>
            <person name="Maven B.E.J."/>
            <person name="Samse-Knapp K."/>
            <person name="Morton S.U."/>
            <person name="McGregor M."/>
            <person name="Gifford C.A."/>
            <person name="Seidman J.G."/>
            <person name="Seidman C.E."/>
            <person name="Gelb B.D."/>
            <person name="Colombo G."/>
            <person name="Conklin B.R."/>
            <person name="Black B.L."/>
            <person name="Bruneau B.G."/>
            <person name="Krogan N.J."/>
            <person name="Pollard K.S."/>
            <person name="Srivastava D."/>
        </authorList>
    </citation>
    <scope>FUNCTION</scope>
    <scope>INTERACTION WITH GLYR1</scope>
</reference>
<reference key="9">
    <citation type="submission" date="2013-07" db="PDB data bank">
        <title>Solution NMR structure of a transcription factor gata-4 from Homo sapiens, Northeast structural genomics consortium (NESG) target HR4783B.</title>
        <authorList>
            <consortium name="Northeast structural genomics consortium (NESG)"/>
        </authorList>
    </citation>
    <scope>STRUCTURE BY NMR OF 262-321</scope>
</reference>
<reference key="10">
    <citation type="journal article" date="2011" name="Proc. Natl. Acad. Sci. U.S.A.">
        <title>Loss-of-function mutation in GATA4 causes anomalies of human testicular development.</title>
        <authorList>
            <person name="Lourenco D."/>
            <person name="Brauner R."/>
            <person name="Rybczynska M."/>
            <person name="Nihoul-Fekete C."/>
            <person name="McElreavey K."/>
            <person name="Bashamboo A."/>
        </authorList>
    </citation>
    <scope>FUNCTION</scope>
    <scope>SUBCELLULAR LOCATION</scope>
    <scope>DNA-BINDING</scope>
    <scope>INTERACTION WITH NR5A1 AND ZFPM2</scope>
    <scope>VARIANT TACHD ARG-221</scope>
    <scope>CHARACTERIZATION OF VARIANT TACHD ARG-221</scope>
</reference>
<reference key="11">
    <citation type="journal article" date="2013" name="Biochem. Biophys. Res. Commun.">
        <title>GATA4 loss-of-function mutation underlies familial dilated cardiomyopathy.</title>
        <authorList>
            <person name="Li R.G."/>
            <person name="Li L."/>
            <person name="Qiu X.B."/>
            <person name="Yuan F."/>
            <person name="Xu L."/>
            <person name="Li X."/>
            <person name="Xu Y.J."/>
            <person name="Jiang W.F."/>
            <person name="Jiang J.Q."/>
            <person name="Liu X."/>
            <person name="Fang W.Y."/>
            <person name="Zhang M."/>
            <person name="Peng L.Y."/>
            <person name="Qu X.K."/>
            <person name="Yang Y.Q."/>
        </authorList>
    </citation>
    <scope>INVOLVEMENT IN CMD</scope>
    <scope>VARIANT SER-271</scope>
    <scope>CHARACTERIZATION OF VARIANT SER-271</scope>
</reference>
<reference key="12">
    <citation type="journal article" date="2013" name="Hum. Mutat.">
        <title>GATA4 loss-of-function mutations underlie familial tetralogy of fallot.</title>
        <authorList>
            <person name="Yang Y.Q."/>
            <person name="Gharibeh L."/>
            <person name="Li R.G."/>
            <person name="Xin Y.F."/>
            <person name="Wang J."/>
            <person name="Liu Z.M."/>
            <person name="Qiu X.B."/>
            <person name="Xu Y.J."/>
            <person name="Xu L."/>
            <person name="Qu X.K."/>
            <person name="Liu X."/>
            <person name="Fang W.Y."/>
            <person name="Huang R.T."/>
            <person name="Xue S."/>
            <person name="Nemer G."/>
        </authorList>
    </citation>
    <scope>FUNCTION</scope>
    <scope>SUBCELLULAR LOCATION</scope>
    <scope>INTERACTION WITH TBX5</scope>
    <scope>VARIANTS TOF PRO-9; VAL-51 AND SER-285</scope>
    <scope>CHARACTERIZATION OF VARIANTS TOF PRO-9; VAL-51 AND SER-285</scope>
</reference>
<reference key="13">
    <citation type="journal article" date="2014" name="Gene">
        <title>Prevalence and spectrum of GATA4 mutations associated with sporadic dilated cardiomyopathy.</title>
        <authorList>
            <person name="Li J."/>
            <person name="Liu W.D."/>
            <person name="Yang Z.L."/>
            <person name="Yuan F."/>
            <person name="Xu L."/>
            <person name="Li R.G."/>
            <person name="Yang Y.Q."/>
        </authorList>
    </citation>
    <scope>INVOLVEMENT IN CMD</scope>
    <scope>VARIANTS LEU-39; GLN-226 AND SER-279</scope>
    <scope>CHARACTERIZATION OF VARIANTS LEU-39; GLN-226 AND SER-279</scope>
</reference>
<reference key="14">
    <citation type="journal article" date="2016" name="Cell">
        <title>Disease model of GATA4 mutation reveals transcription factor cooperativity in human cardiogenesis.</title>
        <authorList>
            <person name="Ang Y.S."/>
            <person name="Rivas R.N."/>
            <person name="Ribeiro A.J."/>
            <person name="Srivas R."/>
            <person name="Rivera J."/>
            <person name="Stone N.R."/>
            <person name="Pratt K."/>
            <person name="Mohamed T.M."/>
            <person name="Fu J.D."/>
            <person name="Spencer C.I."/>
            <person name="Tippens N.D."/>
            <person name="Li M."/>
            <person name="Narasimha A."/>
            <person name="Radzinsky E."/>
            <person name="Moon-Grady A.J."/>
            <person name="Yu H."/>
            <person name="Pruitt B.L."/>
            <person name="Snyder M.P."/>
            <person name="Srivastava D."/>
        </authorList>
    </citation>
    <scope>FUNCTION</scope>
    <scope>CHARACTERIZATION OF VARIANT ASD2 SER-296</scope>
</reference>
<reference key="15">
    <citation type="journal article" date="2003" name="Nature">
        <title>GATA4 mutations cause human congenital heart defects and reveal an interaction with TBX5.</title>
        <authorList>
            <person name="Garg V."/>
            <person name="Kathiriya I.S."/>
            <person name="Barnes R."/>
            <person name="Schluterman M.K."/>
            <person name="King I.N."/>
            <person name="Butler C.A."/>
            <person name="Rothrock C.R."/>
            <person name="Eapen R.S."/>
            <person name="Hirayama-Yamada K."/>
            <person name="Joo K."/>
            <person name="Matsuoka R."/>
            <person name="Cohen J.C."/>
            <person name="Srivastava D."/>
        </authorList>
    </citation>
    <scope>VARIANT ASD2 SER-296</scope>
</reference>
<reference key="16">
    <citation type="journal article" date="2005" name="Am. J. Med. Genet. A">
        <title>Phenotypes with GATA4 or NKX2.5 mutations in familial atrial septal defect.</title>
        <authorList>
            <person name="Hirayama-Yamada K."/>
            <person name="Kamisago M."/>
            <person name="Akimoto K."/>
            <person name="Aotsuka H."/>
            <person name="Nakamura Y."/>
            <person name="Tomita H."/>
            <person name="Furutani M."/>
            <person name="Imamura S."/>
            <person name="Takao A."/>
            <person name="Nakazawa M."/>
            <person name="Matsuoka R."/>
        </authorList>
    </citation>
    <scope>VARIANTS ASD2 PHE-52 AND SER-296</scope>
</reference>
<reference key="17">
    <citation type="journal article" date="2007" name="J. Med. Genet.">
        <title>GATA4 sequence variants in patients with congenital heart disease.</title>
        <authorList>
            <person name="Tomita-Mitchell A."/>
            <person name="Maslen C.L."/>
            <person name="Morris C.D."/>
            <person name="Garg V."/>
            <person name="Goldmuntz E."/>
        </authorList>
    </citation>
    <scope>VARIANTS ASD2 ALA-93 AND GLU-316</scope>
    <scope>VARIANTS VAL-411 AND ASN-425</scope>
</reference>
<reference key="18">
    <citation type="journal article" date="2007" name="J. Mol. Cell. Cardiol.">
        <title>Spectrum of heart disease associated with murine and human GATA4 mutation.</title>
        <authorList>
            <person name="Rajagopal S.K."/>
            <person name="Ma Q."/>
            <person name="Obler D."/>
            <person name="Shen J."/>
            <person name="Manichaikul A."/>
            <person name="Tomita-Mitchell A."/>
            <person name="Boardman K."/>
            <person name="Briggs C."/>
            <person name="Garg V."/>
            <person name="Srivastava D."/>
            <person name="Goldmuntz E."/>
            <person name="Broman K.W."/>
            <person name="Benson D.W."/>
            <person name="Smoot L.B."/>
            <person name="Pu W.T."/>
        </authorList>
    </citation>
    <scope>VARIANTS ASD2 CYS-296 AND MET-403</scope>
    <scope>VARIANTS AVSD4 SER-163 AND VAL-346</scope>
</reference>
<reference key="19">
    <citation type="journal article" date="2008" name="Eur. J. Med. Genet.">
        <title>GATA4 mutations in 486 Chinese patients with congenital heart disease.</title>
        <authorList>
            <person name="Zhang W."/>
            <person name="Li X."/>
            <person name="Shen A."/>
            <person name="Jiao W."/>
            <person name="Guan X."/>
            <person name="Li Z."/>
        </authorList>
    </citation>
    <scope>VARIANTS VSD1 VAL-6; SER-46 DEL; SER-163; LYS-359; THR-429 AND VAL-442</scope>
    <scope>VARIANTS TOF ALA-118 INS AND GLN-407</scope>
</reference>
<reference key="20">
    <citation type="journal article" date="2010" name="Clin. Chim. Acta">
        <title>A novel mutation of GATA4 in a familial atrial septal defect.</title>
        <authorList>
            <person name="Chen Y."/>
            <person name="Mao J."/>
            <person name="Sun Y."/>
            <person name="Zhang Q."/>
            <person name="Cheng H.B."/>
            <person name="Yan W.H."/>
            <person name="Choy K.W."/>
            <person name="Li H."/>
        </authorList>
    </citation>
    <scope>VARIANT ASD2 MET-280</scope>
</reference>
<reference key="21">
    <citation type="journal article" date="2010" name="Genetica">
        <title>Mutations of the GATA4 and NKX2.5 genes in Chinese pediatric patients with non-familial congenital heart disease.</title>
        <authorList>
            <person name="Peng T."/>
            <person name="Wang L."/>
            <person name="Zhou S.F."/>
            <person name="Li X."/>
        </authorList>
    </citation>
    <scope>VARIANT VSD1 GLN-407</scope>
    <scope>VARIANT TOF SER-163</scope>
</reference>
<reference key="22">
    <citation type="journal article" date="2010" name="J. Thorac. Cardiovasc. Surg.">
        <title>A novel mutation in GATA4 gene associated with dominant inherited familial atrial septal defect.</title>
        <authorList>
            <person name="Chen Y."/>
            <person name="Han Z.Q."/>
            <person name="Yan W.D."/>
            <person name="Tang C.Z."/>
            <person name="Xie J.Y."/>
            <person name="Chen H."/>
            <person name="Hu D.Y."/>
        </authorList>
    </citation>
    <scope>VARIANT ASD2 VAL-310</scope>
</reference>
<reference key="23">
    <citation type="journal article" date="2011" name="Int. J. Mol. Med.">
        <title>A novel GATA4 mutation responsible for congenital ventricular septal defects.</title>
        <authorList>
            <person name="Wang J."/>
            <person name="Fang M."/>
            <person name="Liu X.Y."/>
            <person name="Xin Y.F."/>
            <person name="Liu Z.M."/>
            <person name="Chen X.Z."/>
            <person name="Wang X.Z."/>
            <person name="Fang W.Y."/>
            <person name="Liu X."/>
            <person name="Yang Y.Q."/>
        </authorList>
    </citation>
    <scope>VARIANT VSD1 ARG-296</scope>
</reference>
<reference key="24">
    <citation type="journal article" date="2012" name="Pediatr. Cardiol.">
        <title>A novel GATA4 loss-of-function mutation associated with congenital ventricular septal defect.</title>
        <authorList>
            <person name="Yang Y.Q."/>
            <person name="Li L."/>
            <person name="Wang J."/>
            <person name="Liu X.Y."/>
            <person name="Chen X.Z."/>
            <person name="Zhang W."/>
            <person name="Wang X.Z."/>
            <person name="Jiang J.Q."/>
            <person name="Liu X."/>
            <person name="Fang W.Y."/>
        </authorList>
    </citation>
    <scope>VARIANT VSD1 TRP-43</scope>
    <scope>CHARACTERIZATION OF VARIANT VSD1 TRP-43</scope>
</reference>
<reference key="25">
    <citation type="journal article" date="2016" name="Nature">
        <title>Analysis of protein-coding genetic variation in 60,706 humans.</title>
        <authorList>
            <consortium name="Exome Aggregation Consortium"/>
            <person name="Lek M."/>
            <person name="Karczewski K.J."/>
            <person name="Minikel E.V."/>
            <person name="Samocha K.E."/>
            <person name="Banks E."/>
            <person name="Fennell T."/>
            <person name="O'Donnell-Luria A.H."/>
            <person name="Ware J.S."/>
            <person name="Hill A.J."/>
            <person name="Cummings B.B."/>
            <person name="Tukiainen T."/>
            <person name="Birnbaum D.P."/>
            <person name="Kosmicki J.A."/>
            <person name="Duncan L.E."/>
            <person name="Estrada K."/>
            <person name="Zhao F."/>
            <person name="Zou J."/>
            <person name="Pierce-Hoffman E."/>
            <person name="Berghout J."/>
            <person name="Cooper D.N."/>
            <person name="Deflaux N."/>
            <person name="DePristo M."/>
            <person name="Do R."/>
            <person name="Flannick J."/>
            <person name="Fromer M."/>
            <person name="Gauthier L."/>
            <person name="Goldstein J."/>
            <person name="Gupta N."/>
            <person name="Howrigan D."/>
            <person name="Kiezun A."/>
            <person name="Kurki M.I."/>
            <person name="Moonshine A.L."/>
            <person name="Natarajan P."/>
            <person name="Orozco L."/>
            <person name="Peloso G.M."/>
            <person name="Poplin R."/>
            <person name="Rivas M.A."/>
            <person name="Ruano-Rubio V."/>
            <person name="Rose S.A."/>
            <person name="Ruderfer D.M."/>
            <person name="Shakir K."/>
            <person name="Stenson P.D."/>
            <person name="Stevens C."/>
            <person name="Thomas B.P."/>
            <person name="Tiao G."/>
            <person name="Tusie-Luna M.T."/>
            <person name="Weisburd B."/>
            <person name="Won H.H."/>
            <person name="Yu D."/>
            <person name="Altshuler D.M."/>
            <person name="Ardissino D."/>
            <person name="Boehnke M."/>
            <person name="Danesh J."/>
            <person name="Donnelly S."/>
            <person name="Elosua R."/>
            <person name="Florez J.C."/>
            <person name="Gabriel S.B."/>
            <person name="Getz G."/>
            <person name="Glatt S.J."/>
            <person name="Hultman C.M."/>
            <person name="Kathiresan S."/>
            <person name="Laakso M."/>
            <person name="McCarroll S."/>
            <person name="McCarthy M.I."/>
            <person name="McGovern D."/>
            <person name="McPherson R."/>
            <person name="Neale B.M."/>
            <person name="Palotie A."/>
            <person name="Purcell S.M."/>
            <person name="Saleheen D."/>
            <person name="Scharf J.M."/>
            <person name="Sklar P."/>
            <person name="Sullivan P.F."/>
            <person name="Tuomilehto J."/>
            <person name="Tsuang M.T."/>
            <person name="Watkins H.C."/>
            <person name="Wilson J.G."/>
            <person name="Daly M.J."/>
            <person name="MacArthur D.G."/>
        </authorList>
    </citation>
    <scope>VARIANT ASN-425</scope>
</reference>
<sequence length="442" mass="44565">MYQSLAMAANHGPPPGAYEAGGPGAFMHGAGAASSPVYVPTPRVPSSVLGLSYLQGGGAGSASGGASGGSSGGAASGAGPGTQQGSPGWSQAGADGAAYTPPPVSPRFSFPGTTGSLAAAAAAAAAREAAAYSSGGGAAGAGLAGREQYGRAGFAGSYSSPYPAYMADVGASWAAAAAASAGPFDSPVLHSLPGRANPAARHPNLDMFDDFSEGRECVNCGAMSTPLWRRDGTGHYLCNACGLYHKMNGINRPLIKPQRRLSASRRVGLSCANCQTTTTTLWRRNAEGEPVCNACGLYMKLHGVPRPLAMRKEGIQTRKRKPKNLNKSKTPAAPSGSESLPPASGASSNSSNATTSSSEEMRPIKTEPGLSSHYGHSSSVSQTFSVSAMSGHGPSIHPVLSALKLSPQGYASPVSQSPQTSSKQDSWNSLVLADSHGDIITA</sequence>
<comment type="function">
    <text evidence="2 3 7 12 16 19 23 24">Transcriptional activator that binds to the consensus sequence 5'-AGATAG-3' and plays a key role in cardiac development and function (PubMed:24000169, PubMed:27984724, PubMed:35182466). In cooperation with TBX5, it binds to cardiac super-enhancers and promotes cardiomyocyte gene expression, while it down-regulates endocardial and endothelial gene expression (PubMed:27984724). Involved in bone morphogenetic protein (BMP)-mediated induction of cardiac-specific gene expression. Binds to BMP response element (BMPRE) DNA sequences within cardiac activating regions (By similarity). Acts as a transcriptional activator of ANF in cooperation with NKX2-5 (By similarity). Promotes cardiac myocyte enlargement (PubMed:20081228). Required during testicular development (PubMed:21220346). May play a role in sphingolipid signaling by regulating the expression of sphingosine-1-phosphate degrading enzyme, sphingosine-1-phosphate lyase (PubMed:15734735).</text>
</comment>
<comment type="subunit">
    <text evidence="3 12 16 19 24">Interacts with ZNF260 (By similarity). Interacts with the homeobox domain of NKX2-5 through its C-terminal zinc finger. Also interacts with JARID2 which represses its ability to activate transcription of ANF. Interacts (via the second Zn finger) with NFATC4 (By similarity). Interacts with LMCD1 (By similarity). Forms a complex made of CDK9, CCNT1/cyclin-T1, EP300 and GATA4 that stimulates hypertrophy in cardiomyocytes. Interacts with NR5A1, ZFPM2 and TBX5. Interacts with TBX18. Interacts with GLYR1; the interaction is required for a synergistic activation of GATA4 target genes transcription (PubMed:35182466). Interacts with PHF7; the interaction promotes GATA4 binding to its transcription targets (By similarity).</text>
</comment>
<comment type="interaction">
    <interactant intactId="EBI-7049352">
        <id>P43694</id>
    </interactant>
    <interactant intactId="EBI-1255893">
        <id>Q9Y2Y9</id>
        <label>KLF13</label>
    </interactant>
    <organismsDiffer>false</organismsDiffer>
    <experiments>3</experiments>
</comment>
<comment type="interaction">
    <interactant intactId="EBI-7049352">
        <id>P43694</id>
    </interactant>
    <interactant intactId="EBI-936601">
        <id>P52952</id>
        <label>NKX2-5</label>
    </interactant>
    <organismsDiffer>false</organismsDiffer>
    <experiments>2</experiments>
</comment>
<comment type="subcellular location">
    <subcellularLocation>
        <location evidence="16 19">Nucleus</location>
    </subcellularLocation>
</comment>
<comment type="alternative products">
    <event type="alternative splicing"/>
    <isoform>
        <id>P43694-1</id>
        <name>1</name>
        <sequence type="displayed"/>
    </isoform>
    <isoform>
        <id>P43694-2</id>
        <name>2</name>
        <sequence type="described" ref="VSP_055082"/>
    </isoform>
</comment>
<comment type="PTM">
    <text evidence="1">Methylation at Lys-300 attenuates transcriptional activity.</text>
</comment>
<comment type="disease" evidence="6 8 9 10 13 14 23">
    <disease id="DI-00150">
        <name>Atrial septal defect 2</name>
        <acronym>ASD2</acronym>
        <description>A congenital heart malformation characterized by incomplete closure of the wall between the atria resulting in blood flow from the left to the right atria. Patients show other heart abnormalities including ventricular and atrioventricular septal defects, pulmonary valve thickening or insufficiency of the cardiac valves. The disease is not associated with defects in the cardiac conduction system or non-cardiac abnormalities.</description>
        <dbReference type="MIM" id="607941"/>
    </disease>
    <text>The disease is caused by variants affecting the gene represented in this entry.</text>
</comment>
<comment type="disease" evidence="11 15 17 18">
    <disease id="DI-03329">
        <name>Ventricular septal defect 1</name>
        <acronym>VSD1</acronym>
        <description>A common form of congenital cardiovascular anomaly that may occur alone or in combination with other cardiac malformations. It can affect any portion of the ventricular septum, resulting in abnormal communications between the two lower chambers of the heart. Classification is based on location of the communication, such as perimembranous, inlet, outlet (infundibular), central muscular, marginal muscular, or apical muscular defect. Large defects that go unrepaired may give rise to cardiac enlargement, congestive heart failure, pulmonary hypertension, Eisenmenger's syndrome, delayed fetal brain development, arrhythmias, and even sudden cardiac death.</description>
        <dbReference type="MIM" id="614429"/>
    </disease>
    <text>The disease is caused by variants affecting the gene represented in this entry.</text>
</comment>
<comment type="disease" evidence="11 15 19">
    <disease id="DI-02362">
        <name>Tetralogy of Fallot</name>
        <acronym>TOF</acronym>
        <description>A congenital heart anomaly which consists of pulmonary stenosis, ventricular septal defect, dextroposition of the aorta (aorta is on the right side instead of the left) and hypertrophy of the right ventricle. In this condition, blood from both ventricles (oxygen-rich and oxygen-poor) is pumped into the body often causing cyanosis.</description>
        <dbReference type="MIM" id="187500"/>
    </disease>
    <text>The disease is caused by variants affecting the gene represented in this entry.</text>
</comment>
<comment type="disease" evidence="9">
    <disease id="DI-03332">
        <name>Atrioventricular septal defect 4</name>
        <acronym>AVSD4</acronym>
        <description>A congenital heart malformation characterized by a common atrioventricular junction coexisting with deficient atrioventricular septation. The complete form involves underdevelopment of the lower part of the atrial septum and the upper part of the ventricular septum; the valve itself is also shared. A less severe form, known as ostium primum atrial septal defect, is characterized by separate atrioventricular valvar orifices despite a common junction.</description>
        <dbReference type="MIM" id="614430"/>
    </disease>
    <text>The disease is caused by variants affecting the gene represented in this entry.</text>
</comment>
<comment type="disease" evidence="16">
    <disease id="DI-03956">
        <name>Testicular anomalies with or without congenital heart disease</name>
        <acronym>TACHD</acronym>
        <description>A 46,XY disorder of sex development with variable clinical presentation and defects in testicular differentiation and function. Clinical features include ambiguous genitalia, fused labioscrotal folds, hypospadias, microphallus, and bilateral inguinal hernia containing gonads.</description>
        <dbReference type="MIM" id="615542"/>
    </disease>
    <text>The disease is caused by variants affecting the gene represented in this entry.</text>
</comment>
<comment type="disease">
    <text evidence="20 21">GATA4 mutations can predispose to dilated cardiomyopathy (CMD), a disorder characterized by ventricular dilation and impaired systolic function, resulting in congestive heart failure and arrhythmia. Patients are at risk of premature death.</text>
</comment>
<accession>P43694</accession>
<accession>B7ZKX0</accession>
<accession>B7ZKZ4</accession>
<accession>Q3MJ45</accession>
<accession>Q5IFM8</accession>
<dbReference type="EMBL" id="L34357">
    <property type="protein sequence ID" value="AAA58496.1"/>
    <property type="molecule type" value="mRNA"/>
</dbReference>
<dbReference type="EMBL" id="AY740706">
    <property type="protein sequence ID" value="AAW51922.1"/>
    <property type="molecule type" value="mRNA"/>
</dbReference>
<dbReference type="EMBL" id="AC069185">
    <property type="status" value="NOT_ANNOTATED_CDS"/>
    <property type="molecule type" value="Genomic_DNA"/>
</dbReference>
<dbReference type="EMBL" id="AC090790">
    <property type="status" value="NOT_ANNOTATED_CDS"/>
    <property type="molecule type" value="Genomic_DNA"/>
</dbReference>
<dbReference type="EMBL" id="BC101580">
    <property type="protein sequence ID" value="AAI01581.1"/>
    <property type="molecule type" value="mRNA"/>
</dbReference>
<dbReference type="EMBL" id="BC105108">
    <property type="protein sequence ID" value="AAI05109.1"/>
    <property type="molecule type" value="mRNA"/>
</dbReference>
<dbReference type="EMBL" id="BC143434">
    <property type="protein sequence ID" value="AAI43435.1"/>
    <property type="molecule type" value="mRNA"/>
</dbReference>
<dbReference type="EMBL" id="BC143479">
    <property type="protein sequence ID" value="AAI43480.1"/>
    <property type="molecule type" value="mRNA"/>
</dbReference>
<dbReference type="CCDS" id="CCDS5983.1">
    <molecule id="P43694-1"/>
</dbReference>
<dbReference type="CCDS" id="CCDS78303.1">
    <molecule id="P43694-2"/>
</dbReference>
<dbReference type="RefSeq" id="NP_001295022.1">
    <molecule id="P43694-2"/>
    <property type="nucleotide sequence ID" value="NM_001308093.3"/>
</dbReference>
<dbReference type="RefSeq" id="NP_002043.2">
    <molecule id="P43694-1"/>
    <property type="nucleotide sequence ID" value="NM_002052.4"/>
</dbReference>
<dbReference type="RefSeq" id="XP_005272442.1">
    <property type="nucleotide sequence ID" value="XM_005272385.4"/>
</dbReference>
<dbReference type="RefSeq" id="XP_005272443.1">
    <property type="nucleotide sequence ID" value="XM_005272386.1"/>
</dbReference>
<dbReference type="RefSeq" id="XP_006716311.1">
    <property type="nucleotide sequence ID" value="XM_006716248.1"/>
</dbReference>
<dbReference type="RefSeq" id="XP_011542119.1">
    <property type="nucleotide sequence ID" value="XM_011543817.2"/>
</dbReference>
<dbReference type="RefSeq" id="XP_011542120.1">
    <property type="nucleotide sequence ID" value="XM_011543818.2"/>
</dbReference>
<dbReference type="RefSeq" id="XP_016868801.1">
    <property type="nucleotide sequence ID" value="XM_017013312.1"/>
</dbReference>
<dbReference type="PDB" id="2M9W">
    <property type="method" value="NMR"/>
    <property type="chains" value="A=262-321"/>
</dbReference>
<dbReference type="PDB" id="8VG0">
    <property type="method" value="EM"/>
    <property type="resolution" value="3.07 A"/>
    <property type="chains" value="T=1-442"/>
</dbReference>
<dbReference type="PDB" id="8VG1">
    <property type="method" value="EM"/>
    <property type="resolution" value="2.48 A"/>
    <property type="chains" value="T=1-442"/>
</dbReference>
<dbReference type="PDBsum" id="2M9W"/>
<dbReference type="PDBsum" id="8VG0"/>
<dbReference type="PDBsum" id="8VG1"/>
<dbReference type="EMDB" id="EMD-43196"/>
<dbReference type="EMDB" id="EMD-43197"/>
<dbReference type="SMR" id="P43694"/>
<dbReference type="BioGRID" id="108896">
    <property type="interactions" value="398"/>
</dbReference>
<dbReference type="CORUM" id="P43694"/>
<dbReference type="FunCoup" id="P43694">
    <property type="interactions" value="1488"/>
</dbReference>
<dbReference type="IntAct" id="P43694">
    <property type="interactions" value="39"/>
</dbReference>
<dbReference type="MINT" id="P43694"/>
<dbReference type="STRING" id="9606.ENSP00000435712"/>
<dbReference type="ChEMBL" id="CHEMBL1687679"/>
<dbReference type="GlyGen" id="P43694">
    <property type="glycosylation" value="3 sites, 1 O-linked glycan (2 sites)"/>
</dbReference>
<dbReference type="iPTMnet" id="P43694"/>
<dbReference type="PhosphoSitePlus" id="P43694"/>
<dbReference type="BioMuta" id="GATA4"/>
<dbReference type="DMDM" id="215274105"/>
<dbReference type="jPOST" id="P43694"/>
<dbReference type="MassIVE" id="P43694"/>
<dbReference type="PaxDb" id="9606-ENSP00000334458"/>
<dbReference type="PeptideAtlas" id="P43694"/>
<dbReference type="ProteomicsDB" id="55652">
    <molecule id="P43694-1"/>
</dbReference>
<dbReference type="ProteomicsDB" id="7203"/>
<dbReference type="Pumba" id="P43694"/>
<dbReference type="Antibodypedia" id="3405">
    <property type="antibodies" value="768 antibodies from 45 providers"/>
</dbReference>
<dbReference type="DNASU" id="2626"/>
<dbReference type="Ensembl" id="ENST00000335135.8">
    <molecule id="P43694-1"/>
    <property type="protein sequence ID" value="ENSP00000334458.4"/>
    <property type="gene ID" value="ENSG00000136574.19"/>
</dbReference>
<dbReference type="Ensembl" id="ENST00000532059.6">
    <molecule id="P43694-2"/>
    <property type="protein sequence ID" value="ENSP00000435712.1"/>
    <property type="gene ID" value="ENSG00000136574.19"/>
</dbReference>
<dbReference type="Ensembl" id="ENST00000622443.3">
    <molecule id="P43694-1"/>
    <property type="protein sequence ID" value="ENSP00000482268.2"/>
    <property type="gene ID" value="ENSG00000136574.19"/>
</dbReference>
<dbReference type="Ensembl" id="ENST00000643249.3">
    <molecule id="P43694-2"/>
    <property type="protein sequence ID" value="ENSP00000493647.1"/>
    <property type="gene ID" value="ENSG00000285109.4"/>
</dbReference>
<dbReference type="Ensembl" id="ENST00000647274.1">
    <molecule id="P43694-1"/>
    <property type="protein sequence ID" value="ENSP00000495511.1"/>
    <property type="gene ID" value="ENSG00000285109.4"/>
</dbReference>
<dbReference type="GeneID" id="2626"/>
<dbReference type="KEGG" id="hsa:2626"/>
<dbReference type="MANE-Select" id="ENST00000532059.6">
    <molecule id="P43694-2"/>
    <property type="protein sequence ID" value="ENSP00000435712.1"/>
    <property type="RefSeq nucleotide sequence ID" value="NM_001308093.3"/>
    <property type="RefSeq protein sequence ID" value="NP_001295022.1"/>
</dbReference>
<dbReference type="UCSC" id="uc003wuc.3">
    <molecule id="P43694-1"/>
    <property type="organism name" value="human"/>
</dbReference>
<dbReference type="AGR" id="HGNC:4173"/>
<dbReference type="CTD" id="2626"/>
<dbReference type="DisGeNET" id="2626"/>
<dbReference type="GeneCards" id="GATA4"/>
<dbReference type="HGNC" id="HGNC:4173">
    <property type="gene designation" value="GATA4"/>
</dbReference>
<dbReference type="HPA" id="ENSG00000136574">
    <property type="expression patterns" value="Tissue enhanced (heart muscle, ovary, pancreas)"/>
</dbReference>
<dbReference type="MalaCards" id="GATA4"/>
<dbReference type="MIM" id="187500">
    <property type="type" value="phenotype"/>
</dbReference>
<dbReference type="MIM" id="600576">
    <property type="type" value="gene"/>
</dbReference>
<dbReference type="MIM" id="607941">
    <property type="type" value="phenotype"/>
</dbReference>
<dbReference type="MIM" id="614429">
    <property type="type" value="phenotype"/>
</dbReference>
<dbReference type="MIM" id="614430">
    <property type="type" value="phenotype"/>
</dbReference>
<dbReference type="MIM" id="615542">
    <property type="type" value="phenotype"/>
</dbReference>
<dbReference type="neXtProt" id="NX_P43694"/>
<dbReference type="OpenTargets" id="ENSG00000136574"/>
<dbReference type="Orphanet" id="251510">
    <property type="disease" value="46,XY partial gonadal dysgenesis"/>
</dbReference>
<dbReference type="Orphanet" id="251071">
    <property type="disease" value="8p23.1 microdeletion syndrome"/>
</dbReference>
<dbReference type="Orphanet" id="99103">
    <property type="disease" value="Atrial septal defect, ostium secundum type"/>
</dbReference>
<dbReference type="Orphanet" id="99067">
    <property type="disease" value="Complete atrioventricular septal defect with ventricular hypoplasia"/>
</dbReference>
<dbReference type="Orphanet" id="99068">
    <property type="disease" value="Complete atrioventricular septal defect-tetralogy of Fallot"/>
</dbReference>
<dbReference type="Orphanet" id="334">
    <property type="disease" value="Familial atrial fibrillation"/>
</dbReference>
<dbReference type="Orphanet" id="576232">
    <property type="disease" value="Partial atrioventricular septal defect with ventricular hypoplasia"/>
</dbReference>
<dbReference type="Orphanet" id="3303">
    <property type="disease" value="Tetralogy of Fallot"/>
</dbReference>
<dbReference type="PharmGKB" id="PA28587"/>
<dbReference type="VEuPathDB" id="HostDB:ENSG00000136574"/>
<dbReference type="eggNOG" id="KOG1601">
    <property type="taxonomic scope" value="Eukaryota"/>
</dbReference>
<dbReference type="GeneTree" id="ENSGT00940000158349"/>
<dbReference type="HOGENOM" id="CLU_027524_0_0_1"/>
<dbReference type="InParanoid" id="P43694"/>
<dbReference type="OMA" id="MANHGPP"/>
<dbReference type="OrthoDB" id="515401at2759"/>
<dbReference type="PAN-GO" id="P43694">
    <property type="GO annotations" value="5 GO annotations based on evolutionary models"/>
</dbReference>
<dbReference type="PhylomeDB" id="P43694"/>
<dbReference type="TreeFam" id="TF315391"/>
<dbReference type="PathwayCommons" id="P43694"/>
<dbReference type="Reactome" id="R-HSA-2032785">
    <property type="pathway name" value="YAP1- and WWTR1 (TAZ)-stimulated gene expression"/>
</dbReference>
<dbReference type="Reactome" id="R-HSA-400511">
    <property type="pathway name" value="Synthesis, secretion, and inactivation of Glucose-dependent Insulinotropic Polypeptide (GIP)"/>
</dbReference>
<dbReference type="Reactome" id="R-HSA-5578768">
    <property type="pathway name" value="Physiological factors"/>
</dbReference>
<dbReference type="Reactome" id="R-HSA-9690406">
    <property type="pathway name" value="Transcriptional regulation of testis differentiation"/>
</dbReference>
<dbReference type="Reactome" id="R-HSA-9733709">
    <property type="pathway name" value="Cardiogenesis"/>
</dbReference>
<dbReference type="Reactome" id="R-HSA-9758920">
    <property type="pathway name" value="Formation of lateral plate mesoderm"/>
</dbReference>
<dbReference type="Reactome" id="R-HSA-9823730">
    <property type="pathway name" value="Formation of definitive endoderm"/>
</dbReference>
<dbReference type="Reactome" id="R-HSA-983231">
    <property type="pathway name" value="Factors involved in megakaryocyte development and platelet production"/>
</dbReference>
<dbReference type="Reactome" id="R-HSA-9925561">
    <property type="pathway name" value="Developmental Lineage of Pancreatic Acinar Cells"/>
</dbReference>
<dbReference type="SignaLink" id="P43694"/>
<dbReference type="SIGNOR" id="P43694"/>
<dbReference type="BioGRID-ORCS" id="2626">
    <property type="hits" value="18 hits in 1179 CRISPR screens"/>
</dbReference>
<dbReference type="ChiTaRS" id="GATA4">
    <property type="organism name" value="human"/>
</dbReference>
<dbReference type="EvolutionaryTrace" id="P43694"/>
<dbReference type="GeneWiki" id="GATA4"/>
<dbReference type="GenomeRNAi" id="2626"/>
<dbReference type="Pharos" id="P43694">
    <property type="development level" value="Tbio"/>
</dbReference>
<dbReference type="PRO" id="PR:P43694"/>
<dbReference type="Proteomes" id="UP000005640">
    <property type="component" value="Chromosome 8"/>
</dbReference>
<dbReference type="RNAct" id="P43694">
    <property type="molecule type" value="protein"/>
</dbReference>
<dbReference type="Bgee" id="ENSG00000136574">
    <property type="expression patterns" value="Expressed in right atrium auricular region and 62 other cell types or tissues"/>
</dbReference>
<dbReference type="ExpressionAtlas" id="P43694">
    <property type="expression patterns" value="baseline and differential"/>
</dbReference>
<dbReference type="GO" id="GO:0000785">
    <property type="term" value="C:chromatin"/>
    <property type="evidence" value="ECO:0000247"/>
    <property type="project" value="NTNU_SB"/>
</dbReference>
<dbReference type="GO" id="GO:0016604">
    <property type="term" value="C:nuclear body"/>
    <property type="evidence" value="ECO:0000314"/>
    <property type="project" value="HPA"/>
</dbReference>
<dbReference type="GO" id="GO:0005654">
    <property type="term" value="C:nucleoplasm"/>
    <property type="evidence" value="ECO:0000304"/>
    <property type="project" value="Reactome"/>
</dbReference>
<dbReference type="GO" id="GO:0005634">
    <property type="term" value="C:nucleus"/>
    <property type="evidence" value="ECO:0000314"/>
    <property type="project" value="UniProtKB"/>
</dbReference>
<dbReference type="GO" id="GO:0090575">
    <property type="term" value="C:RNA polymerase II transcription regulator complex"/>
    <property type="evidence" value="ECO:0000314"/>
    <property type="project" value="BHF-UCL"/>
</dbReference>
<dbReference type="GO" id="GO:0070410">
    <property type="term" value="F:co-SMAD binding"/>
    <property type="evidence" value="ECO:0000353"/>
    <property type="project" value="BHF-UCL"/>
</dbReference>
<dbReference type="GO" id="GO:0003677">
    <property type="term" value="F:DNA binding"/>
    <property type="evidence" value="ECO:0000314"/>
    <property type="project" value="UniProtKB"/>
</dbReference>
<dbReference type="GO" id="GO:0001216">
    <property type="term" value="F:DNA-binding transcription activator activity"/>
    <property type="evidence" value="ECO:0000314"/>
    <property type="project" value="BHF-UCL"/>
</dbReference>
<dbReference type="GO" id="GO:0001228">
    <property type="term" value="F:DNA-binding transcription activator activity, RNA polymerase II-specific"/>
    <property type="evidence" value="ECO:0000314"/>
    <property type="project" value="GO_Central"/>
</dbReference>
<dbReference type="GO" id="GO:0000981">
    <property type="term" value="F:DNA-binding transcription factor activity, RNA polymerase II-specific"/>
    <property type="evidence" value="ECO:0000247"/>
    <property type="project" value="NTNU_SB"/>
</dbReference>
<dbReference type="GO" id="GO:0051525">
    <property type="term" value="F:NFAT protein binding"/>
    <property type="evidence" value="ECO:0007669"/>
    <property type="project" value="Ensembl"/>
</dbReference>
<dbReference type="GO" id="GO:0019901">
    <property type="term" value="F:protein kinase binding"/>
    <property type="evidence" value="ECO:0007669"/>
    <property type="project" value="Ensembl"/>
</dbReference>
<dbReference type="GO" id="GO:0000978">
    <property type="term" value="F:RNA polymerase II cis-regulatory region sequence-specific DNA binding"/>
    <property type="evidence" value="ECO:0000314"/>
    <property type="project" value="GO_Central"/>
</dbReference>
<dbReference type="GO" id="GO:0000977">
    <property type="term" value="F:RNA polymerase II transcription regulatory region sequence-specific DNA binding"/>
    <property type="evidence" value="ECO:0000316"/>
    <property type="project" value="BHF-UCL"/>
</dbReference>
<dbReference type="GO" id="GO:0061629">
    <property type="term" value="F:RNA polymerase II-specific DNA-binding transcription factor binding"/>
    <property type="evidence" value="ECO:0000353"/>
    <property type="project" value="BHF-UCL"/>
</dbReference>
<dbReference type="GO" id="GO:0043565">
    <property type="term" value="F:sequence-specific DNA binding"/>
    <property type="evidence" value="ECO:0000250"/>
    <property type="project" value="BHF-UCL"/>
</dbReference>
<dbReference type="GO" id="GO:1990837">
    <property type="term" value="F:sequence-specific double-stranded DNA binding"/>
    <property type="evidence" value="ECO:0000314"/>
    <property type="project" value="ARUK-UCL"/>
</dbReference>
<dbReference type="GO" id="GO:0000976">
    <property type="term" value="F:transcription cis-regulatory region binding"/>
    <property type="evidence" value="ECO:0000314"/>
    <property type="project" value="MGI"/>
</dbReference>
<dbReference type="GO" id="GO:0008270">
    <property type="term" value="F:zinc ion binding"/>
    <property type="evidence" value="ECO:0007669"/>
    <property type="project" value="UniProtKB-KW"/>
</dbReference>
<dbReference type="GO" id="GO:0003180">
    <property type="term" value="P:aortic valve morphogenesis"/>
    <property type="evidence" value="ECO:0000315"/>
    <property type="project" value="BHF-UCL"/>
</dbReference>
<dbReference type="GO" id="GO:0060413">
    <property type="term" value="P:atrial septum morphogenesis"/>
    <property type="evidence" value="ECO:0000315"/>
    <property type="project" value="BHF-UCL"/>
</dbReference>
<dbReference type="GO" id="GO:0003289">
    <property type="term" value="P:atrial septum primum morphogenesis"/>
    <property type="evidence" value="ECO:0000250"/>
    <property type="project" value="BHF-UCL"/>
</dbReference>
<dbReference type="GO" id="GO:0003290">
    <property type="term" value="P:atrial septum secundum morphogenesis"/>
    <property type="evidence" value="ECO:0000315"/>
    <property type="project" value="BHF-UCL"/>
</dbReference>
<dbReference type="GO" id="GO:0036302">
    <property type="term" value="P:atrioventricular canal development"/>
    <property type="evidence" value="ECO:0000303"/>
    <property type="project" value="BHF-UCL"/>
</dbReference>
<dbReference type="GO" id="GO:0003162">
    <property type="term" value="P:atrioventricular node development"/>
    <property type="evidence" value="ECO:0000303"/>
    <property type="project" value="BHF-UCL"/>
</dbReference>
<dbReference type="GO" id="GO:0003190">
    <property type="term" value="P:atrioventricular valve formation"/>
    <property type="evidence" value="ECO:0000250"/>
    <property type="project" value="BHF-UCL"/>
</dbReference>
<dbReference type="GO" id="GO:0061026">
    <property type="term" value="P:cardiac muscle tissue regeneration"/>
    <property type="evidence" value="ECO:0000250"/>
    <property type="project" value="BHF-UCL"/>
</dbReference>
<dbReference type="GO" id="GO:0003215">
    <property type="term" value="P:cardiac right ventricle morphogenesis"/>
    <property type="evidence" value="ECO:0000250"/>
    <property type="project" value="BHF-UCL"/>
</dbReference>
<dbReference type="GO" id="GO:0003208">
    <property type="term" value="P:cardiac ventricle morphogenesis"/>
    <property type="evidence" value="ECO:0000304"/>
    <property type="project" value="BHF-UCL"/>
</dbReference>
<dbReference type="GO" id="GO:0045165">
    <property type="term" value="P:cell fate commitment"/>
    <property type="evidence" value="ECO:0000318"/>
    <property type="project" value="GO_Central"/>
</dbReference>
<dbReference type="GO" id="GO:0061049">
    <property type="term" value="P:cell growth involved in cardiac muscle cell development"/>
    <property type="evidence" value="ECO:0007669"/>
    <property type="project" value="Ensembl"/>
</dbReference>
<dbReference type="GO" id="GO:0007267">
    <property type="term" value="P:cell-cell signaling"/>
    <property type="evidence" value="ECO:0000250"/>
    <property type="project" value="BHF-UCL"/>
</dbReference>
<dbReference type="GO" id="GO:0071333">
    <property type="term" value="P:cellular response to glucose stimulus"/>
    <property type="evidence" value="ECO:0007669"/>
    <property type="project" value="Ensembl"/>
</dbReference>
<dbReference type="GO" id="GO:0048617">
    <property type="term" value="P:embryonic foregut morphogenesis"/>
    <property type="evidence" value="ECO:0000250"/>
    <property type="project" value="BHF-UCL"/>
</dbReference>
<dbReference type="GO" id="GO:0035054">
    <property type="term" value="P:embryonic heart tube anterior/posterior pattern specification"/>
    <property type="evidence" value="ECO:0000250"/>
    <property type="project" value="BHF-UCL"/>
</dbReference>
<dbReference type="GO" id="GO:0003197">
    <property type="term" value="P:endocardial cushion development"/>
    <property type="evidence" value="ECO:0000315"/>
    <property type="project" value="BHF-UCL"/>
</dbReference>
<dbReference type="GO" id="GO:0007492">
    <property type="term" value="P:endoderm development"/>
    <property type="evidence" value="ECO:0000304"/>
    <property type="project" value="BHF-UCL"/>
</dbReference>
<dbReference type="GO" id="GO:0001947">
    <property type="term" value="P:heart looping"/>
    <property type="evidence" value="ECO:0000250"/>
    <property type="project" value="BHF-UCL"/>
</dbReference>
<dbReference type="GO" id="GO:0060575">
    <property type="term" value="P:intestinal epithelial cell differentiation"/>
    <property type="evidence" value="ECO:0000314"/>
    <property type="project" value="MGI"/>
</dbReference>
<dbReference type="GO" id="GO:0008584">
    <property type="term" value="P:male gonad development"/>
    <property type="evidence" value="ECO:0000315"/>
    <property type="project" value="UniProtKB"/>
</dbReference>
<dbReference type="GO" id="GO:2001234">
    <property type="term" value="P:negative regulation of apoptotic signaling pathway"/>
    <property type="evidence" value="ECO:0000250"/>
    <property type="project" value="BHF-UCL"/>
</dbReference>
<dbReference type="GO" id="GO:0010507">
    <property type="term" value="P:negative regulation of autophagy"/>
    <property type="evidence" value="ECO:0007669"/>
    <property type="project" value="Ensembl"/>
</dbReference>
<dbReference type="GO" id="GO:0010667">
    <property type="term" value="P:negative regulation of cardiac muscle cell apoptotic process"/>
    <property type="evidence" value="ECO:0000250"/>
    <property type="project" value="BHF-UCL"/>
</dbReference>
<dbReference type="GO" id="GO:1902176">
    <property type="term" value="P:negative regulation of oxidative stress-induced intrinsic apoptotic signaling pathway"/>
    <property type="evidence" value="ECO:0000250"/>
    <property type="project" value="BHF-UCL"/>
</dbReference>
<dbReference type="GO" id="GO:0000122">
    <property type="term" value="P:negative regulation of transcription by RNA polymerase II"/>
    <property type="evidence" value="ECO:0000318"/>
    <property type="project" value="GO_Central"/>
</dbReference>
<dbReference type="GO" id="GO:0045766">
    <property type="term" value="P:positive regulation of angiogenesis"/>
    <property type="evidence" value="ECO:0000250"/>
    <property type="project" value="BHF-UCL"/>
</dbReference>
<dbReference type="GO" id="GO:0030513">
    <property type="term" value="P:positive regulation of BMP signaling pathway"/>
    <property type="evidence" value="ECO:0007669"/>
    <property type="project" value="Ensembl"/>
</dbReference>
<dbReference type="GO" id="GO:0045893">
    <property type="term" value="P:positive regulation of DNA-templated transcription"/>
    <property type="evidence" value="ECO:0000314"/>
    <property type="project" value="UniProtKB"/>
</dbReference>
<dbReference type="GO" id="GO:0045944">
    <property type="term" value="P:positive regulation of transcription by RNA polymerase II"/>
    <property type="evidence" value="ECO:0000314"/>
    <property type="project" value="BHF-UCL"/>
</dbReference>
<dbReference type="GO" id="GO:0010575">
    <property type="term" value="P:positive regulation of vascular endothelial growth factor production"/>
    <property type="evidence" value="ECO:0000250"/>
    <property type="project" value="BHF-UCL"/>
</dbReference>
<dbReference type="GO" id="GO:0086004">
    <property type="term" value="P:regulation of cardiac muscle cell contraction"/>
    <property type="evidence" value="ECO:0007669"/>
    <property type="project" value="Ensembl"/>
</dbReference>
<dbReference type="GO" id="GO:0006355">
    <property type="term" value="P:regulation of DNA-templated transcription"/>
    <property type="evidence" value="ECO:0000250"/>
    <property type="project" value="BHF-UCL"/>
</dbReference>
<dbReference type="GO" id="GO:0009612">
    <property type="term" value="P:response to mechanical stimulus"/>
    <property type="evidence" value="ECO:0007669"/>
    <property type="project" value="Ensembl"/>
</dbReference>
<dbReference type="GO" id="GO:0033189">
    <property type="term" value="P:response to vitamin A"/>
    <property type="evidence" value="ECO:0007669"/>
    <property type="project" value="Ensembl"/>
</dbReference>
<dbReference type="GO" id="GO:0009410">
    <property type="term" value="P:response to xenobiotic stimulus"/>
    <property type="evidence" value="ECO:0000315"/>
    <property type="project" value="BHF-UCL"/>
</dbReference>
<dbReference type="GO" id="GO:0060290">
    <property type="term" value="P:transdifferentiation"/>
    <property type="evidence" value="ECO:0007669"/>
    <property type="project" value="Ensembl"/>
</dbReference>
<dbReference type="GO" id="GO:0003281">
    <property type="term" value="P:ventricular septum development"/>
    <property type="evidence" value="ECO:0000250"/>
    <property type="project" value="BHF-UCL"/>
</dbReference>
<dbReference type="GO" id="GO:0042060">
    <property type="term" value="P:wound healing"/>
    <property type="evidence" value="ECO:0000250"/>
    <property type="project" value="BHF-UCL"/>
</dbReference>
<dbReference type="CDD" id="cd00202">
    <property type="entry name" value="ZnF_GATA"/>
    <property type="match status" value="2"/>
</dbReference>
<dbReference type="FunFam" id="3.30.50.10:FF:000001">
    <property type="entry name" value="GATA transcription factor (GATAd)"/>
    <property type="match status" value="1"/>
</dbReference>
<dbReference type="FunFam" id="3.30.50.10:FF:000032">
    <property type="entry name" value="Transcription factor GATA-3"/>
    <property type="match status" value="1"/>
</dbReference>
<dbReference type="Gene3D" id="3.30.50.10">
    <property type="entry name" value="Erythroid Transcription Factor GATA-1, subunit A"/>
    <property type="match status" value="2"/>
</dbReference>
<dbReference type="InterPro" id="IPR008013">
    <property type="entry name" value="GATA_N"/>
</dbReference>
<dbReference type="InterPro" id="IPR016375">
    <property type="entry name" value="TF_GATA_4/5/6"/>
</dbReference>
<dbReference type="InterPro" id="IPR039355">
    <property type="entry name" value="Transcription_factor_GATA"/>
</dbReference>
<dbReference type="InterPro" id="IPR000679">
    <property type="entry name" value="Znf_GATA"/>
</dbReference>
<dbReference type="InterPro" id="IPR013088">
    <property type="entry name" value="Znf_NHR/GATA"/>
</dbReference>
<dbReference type="PANTHER" id="PTHR10071">
    <property type="entry name" value="TRANSCRIPTION FACTOR GATA FAMILY MEMBER"/>
    <property type="match status" value="1"/>
</dbReference>
<dbReference type="PANTHER" id="PTHR10071:SF154">
    <property type="entry name" value="TRANSCRIPTION FACTOR GATA-4"/>
    <property type="match status" value="1"/>
</dbReference>
<dbReference type="Pfam" id="PF00320">
    <property type="entry name" value="GATA"/>
    <property type="match status" value="2"/>
</dbReference>
<dbReference type="Pfam" id="PF05349">
    <property type="entry name" value="GATA-N"/>
    <property type="match status" value="1"/>
</dbReference>
<dbReference type="PIRSF" id="PIRSF003028">
    <property type="entry name" value="TF_GATA_4/5/6"/>
    <property type="match status" value="1"/>
</dbReference>
<dbReference type="PRINTS" id="PR00619">
    <property type="entry name" value="GATAZNFINGER"/>
</dbReference>
<dbReference type="SMART" id="SM00401">
    <property type="entry name" value="ZnF_GATA"/>
    <property type="match status" value="2"/>
</dbReference>
<dbReference type="SUPFAM" id="SSF57716">
    <property type="entry name" value="Glucocorticoid receptor-like (DNA-binding domain)"/>
    <property type="match status" value="2"/>
</dbReference>
<dbReference type="PROSITE" id="PS00344">
    <property type="entry name" value="GATA_ZN_FINGER_1"/>
    <property type="match status" value="2"/>
</dbReference>
<dbReference type="PROSITE" id="PS50114">
    <property type="entry name" value="GATA_ZN_FINGER_2"/>
    <property type="match status" value="2"/>
</dbReference>
<evidence type="ECO:0000250" key="1"/>
<evidence type="ECO:0000250" key="2">
    <source>
        <dbReference type="UniProtKB" id="P46152"/>
    </source>
</evidence>
<evidence type="ECO:0000250" key="3">
    <source>
        <dbReference type="UniProtKB" id="Q08369"/>
    </source>
</evidence>
<evidence type="ECO:0000255" key="4">
    <source>
        <dbReference type="PROSITE-ProRule" id="PRU00094"/>
    </source>
</evidence>
<evidence type="ECO:0000256" key="5">
    <source>
        <dbReference type="SAM" id="MobiDB-lite"/>
    </source>
</evidence>
<evidence type="ECO:0000269" key="6">
    <source>
    </source>
</evidence>
<evidence type="ECO:0000269" key="7">
    <source>
    </source>
</evidence>
<evidence type="ECO:0000269" key="8">
    <source>
    </source>
</evidence>
<evidence type="ECO:0000269" key="9">
    <source>
    </source>
</evidence>
<evidence type="ECO:0000269" key="10">
    <source>
    </source>
</evidence>
<evidence type="ECO:0000269" key="11">
    <source>
    </source>
</evidence>
<evidence type="ECO:0000269" key="12">
    <source>
    </source>
</evidence>
<evidence type="ECO:0000269" key="13">
    <source>
    </source>
</evidence>
<evidence type="ECO:0000269" key="14">
    <source>
    </source>
</evidence>
<evidence type="ECO:0000269" key="15">
    <source>
    </source>
</evidence>
<evidence type="ECO:0000269" key="16">
    <source>
    </source>
</evidence>
<evidence type="ECO:0000269" key="17">
    <source>
    </source>
</evidence>
<evidence type="ECO:0000269" key="18">
    <source>
    </source>
</evidence>
<evidence type="ECO:0000269" key="19">
    <source>
    </source>
</evidence>
<evidence type="ECO:0000269" key="20">
    <source>
    </source>
</evidence>
<evidence type="ECO:0000269" key="21">
    <source>
    </source>
</evidence>
<evidence type="ECO:0000269" key="22">
    <source>
    </source>
</evidence>
<evidence type="ECO:0000269" key="23">
    <source>
    </source>
</evidence>
<evidence type="ECO:0000269" key="24">
    <source>
    </source>
</evidence>
<evidence type="ECO:0000269" key="25">
    <source>
    </source>
</evidence>
<evidence type="ECO:0000303" key="26">
    <source>
    </source>
</evidence>
<evidence type="ECO:0000305" key="27"/>
<evidence type="ECO:0007829" key="28">
    <source>
        <dbReference type="PDB" id="2M9W"/>
    </source>
</evidence>
<evidence type="ECO:0007829" key="29">
    <source>
        <dbReference type="PDB" id="8VG1"/>
    </source>
</evidence>